<organism>
    <name type="scientific">Pseudomonas fluorescens (strain ATCC BAA-477 / NRRL B-23932 / Pf-5)</name>
    <dbReference type="NCBI Taxonomy" id="220664"/>
    <lineage>
        <taxon>Bacteria</taxon>
        <taxon>Pseudomonadati</taxon>
        <taxon>Pseudomonadota</taxon>
        <taxon>Gammaproteobacteria</taxon>
        <taxon>Pseudomonadales</taxon>
        <taxon>Pseudomonadaceae</taxon>
        <taxon>Pseudomonas</taxon>
    </lineage>
</organism>
<proteinExistence type="inferred from homology"/>
<sequence length="336" mass="37157">MSRVTLSRYLIEQTRSNNTPADLRFLIEVVARACKEISHAVSKGALGGVLGSMGTENVQGEVQKKLDVISNEILLEANEWGGHLAGMASEEMDNAYQIPGKYPKGAYLLVFDPLDGSSNIDINAPVGTIFSVLRCPNEYLSQNEALNEKAFLQPGTQQVAAGYAIYGPQTMLVLTLGDGVKGFTLDREMGSFVLTHEDIKIPESTQEFAINMSNERHWEAPVKRYVEELLAGDTGPLKKNYNMRWVAAMVADVHRILTRGGLFMYPRDSREPEKPGKLRLMYEANPMSFLVEQAGGASTDGHKRILDIQPEGLHQRVAVFLGSKEEVARVTGYHKE</sequence>
<evidence type="ECO:0000255" key="1">
    <source>
        <dbReference type="HAMAP-Rule" id="MF_01855"/>
    </source>
</evidence>
<gene>
    <name evidence="1" type="primary">fbp</name>
    <name type="ordered locus">PFL_0393</name>
</gene>
<name>F16PA_PSEF5</name>
<comment type="catalytic activity">
    <reaction evidence="1">
        <text>beta-D-fructose 1,6-bisphosphate + H2O = beta-D-fructose 6-phosphate + phosphate</text>
        <dbReference type="Rhea" id="RHEA:11064"/>
        <dbReference type="ChEBI" id="CHEBI:15377"/>
        <dbReference type="ChEBI" id="CHEBI:32966"/>
        <dbReference type="ChEBI" id="CHEBI:43474"/>
        <dbReference type="ChEBI" id="CHEBI:57634"/>
        <dbReference type="EC" id="3.1.3.11"/>
    </reaction>
</comment>
<comment type="cofactor">
    <cofactor evidence="1">
        <name>Mg(2+)</name>
        <dbReference type="ChEBI" id="CHEBI:18420"/>
    </cofactor>
    <text evidence="1">Binds 2 magnesium ions per subunit.</text>
</comment>
<comment type="pathway">
    <text evidence="1">Carbohydrate biosynthesis; gluconeogenesis.</text>
</comment>
<comment type="subunit">
    <text evidence="1">Homotetramer.</text>
</comment>
<comment type="subcellular location">
    <subcellularLocation>
        <location evidence="1">Cytoplasm</location>
    </subcellularLocation>
</comment>
<comment type="similarity">
    <text evidence="1">Belongs to the FBPase class 1 family.</text>
</comment>
<dbReference type="EC" id="3.1.3.11" evidence="1"/>
<dbReference type="EMBL" id="CP000076">
    <property type="protein sequence ID" value="AAY95802.1"/>
    <property type="molecule type" value="Genomic_DNA"/>
</dbReference>
<dbReference type="RefSeq" id="WP_011058768.1">
    <property type="nucleotide sequence ID" value="NC_004129.6"/>
</dbReference>
<dbReference type="SMR" id="Q4KJP6"/>
<dbReference type="STRING" id="220664.PFL_0393"/>
<dbReference type="KEGG" id="pfl:PFL_0393"/>
<dbReference type="PATRIC" id="fig|220664.5.peg.401"/>
<dbReference type="eggNOG" id="COG0158">
    <property type="taxonomic scope" value="Bacteria"/>
</dbReference>
<dbReference type="HOGENOM" id="CLU_039977_0_0_6"/>
<dbReference type="UniPathway" id="UPA00138"/>
<dbReference type="Proteomes" id="UP000008540">
    <property type="component" value="Chromosome"/>
</dbReference>
<dbReference type="GO" id="GO:0005829">
    <property type="term" value="C:cytosol"/>
    <property type="evidence" value="ECO:0007669"/>
    <property type="project" value="TreeGrafter"/>
</dbReference>
<dbReference type="GO" id="GO:0042132">
    <property type="term" value="F:fructose 1,6-bisphosphate 1-phosphatase activity"/>
    <property type="evidence" value="ECO:0007669"/>
    <property type="project" value="UniProtKB-UniRule"/>
</dbReference>
<dbReference type="GO" id="GO:0000287">
    <property type="term" value="F:magnesium ion binding"/>
    <property type="evidence" value="ECO:0007669"/>
    <property type="project" value="UniProtKB-UniRule"/>
</dbReference>
<dbReference type="GO" id="GO:0030388">
    <property type="term" value="P:fructose 1,6-bisphosphate metabolic process"/>
    <property type="evidence" value="ECO:0007669"/>
    <property type="project" value="TreeGrafter"/>
</dbReference>
<dbReference type="GO" id="GO:0006002">
    <property type="term" value="P:fructose 6-phosphate metabolic process"/>
    <property type="evidence" value="ECO:0007669"/>
    <property type="project" value="TreeGrafter"/>
</dbReference>
<dbReference type="GO" id="GO:0006000">
    <property type="term" value="P:fructose metabolic process"/>
    <property type="evidence" value="ECO:0007669"/>
    <property type="project" value="TreeGrafter"/>
</dbReference>
<dbReference type="GO" id="GO:0006094">
    <property type="term" value="P:gluconeogenesis"/>
    <property type="evidence" value="ECO:0007669"/>
    <property type="project" value="UniProtKB-UniRule"/>
</dbReference>
<dbReference type="GO" id="GO:0005986">
    <property type="term" value="P:sucrose biosynthetic process"/>
    <property type="evidence" value="ECO:0007669"/>
    <property type="project" value="TreeGrafter"/>
</dbReference>
<dbReference type="CDD" id="cd00354">
    <property type="entry name" value="FBPase"/>
    <property type="match status" value="1"/>
</dbReference>
<dbReference type="FunFam" id="3.30.540.10:FF:000006">
    <property type="entry name" value="Fructose-1,6-bisphosphatase class 1"/>
    <property type="match status" value="1"/>
</dbReference>
<dbReference type="FunFam" id="3.40.190.80:FF:000011">
    <property type="entry name" value="Fructose-1,6-bisphosphatase class 1"/>
    <property type="match status" value="1"/>
</dbReference>
<dbReference type="Gene3D" id="3.40.190.80">
    <property type="match status" value="1"/>
</dbReference>
<dbReference type="Gene3D" id="3.30.540.10">
    <property type="entry name" value="Fructose-1,6-Bisphosphatase, subunit A, domain 1"/>
    <property type="match status" value="1"/>
</dbReference>
<dbReference type="HAMAP" id="MF_01855">
    <property type="entry name" value="FBPase_class1"/>
    <property type="match status" value="1"/>
</dbReference>
<dbReference type="InterPro" id="IPR044015">
    <property type="entry name" value="FBPase_C_dom"/>
</dbReference>
<dbReference type="InterPro" id="IPR000146">
    <property type="entry name" value="FBPase_class-1"/>
</dbReference>
<dbReference type="InterPro" id="IPR033391">
    <property type="entry name" value="FBPase_N"/>
</dbReference>
<dbReference type="InterPro" id="IPR028343">
    <property type="entry name" value="FBPtase"/>
</dbReference>
<dbReference type="NCBIfam" id="NF006778">
    <property type="entry name" value="PRK09293.1-1"/>
    <property type="match status" value="1"/>
</dbReference>
<dbReference type="NCBIfam" id="NF006779">
    <property type="entry name" value="PRK09293.1-3"/>
    <property type="match status" value="1"/>
</dbReference>
<dbReference type="NCBIfam" id="NF006780">
    <property type="entry name" value="PRK09293.1-4"/>
    <property type="match status" value="1"/>
</dbReference>
<dbReference type="PANTHER" id="PTHR11556">
    <property type="entry name" value="FRUCTOSE-1,6-BISPHOSPHATASE-RELATED"/>
    <property type="match status" value="1"/>
</dbReference>
<dbReference type="PANTHER" id="PTHR11556:SF35">
    <property type="entry name" value="SEDOHEPTULOSE-1,7-BISPHOSPHATASE, CHLOROPLASTIC"/>
    <property type="match status" value="1"/>
</dbReference>
<dbReference type="Pfam" id="PF00316">
    <property type="entry name" value="FBPase"/>
    <property type="match status" value="1"/>
</dbReference>
<dbReference type="Pfam" id="PF18913">
    <property type="entry name" value="FBPase_C"/>
    <property type="match status" value="1"/>
</dbReference>
<dbReference type="PIRSF" id="PIRSF500210">
    <property type="entry name" value="FBPtase"/>
    <property type="match status" value="1"/>
</dbReference>
<dbReference type="PIRSF" id="PIRSF000904">
    <property type="entry name" value="FBPtase_SBPase"/>
    <property type="match status" value="1"/>
</dbReference>
<dbReference type="PRINTS" id="PR00115">
    <property type="entry name" value="F16BPHPHTASE"/>
</dbReference>
<dbReference type="SUPFAM" id="SSF56655">
    <property type="entry name" value="Carbohydrate phosphatase"/>
    <property type="match status" value="1"/>
</dbReference>
<feature type="chain" id="PRO_0000364644" description="Fructose-1,6-bisphosphatase class 1">
    <location>
        <begin position="1"/>
        <end position="336"/>
    </location>
</feature>
<feature type="binding site" evidence="1">
    <location>
        <position position="90"/>
    </location>
    <ligand>
        <name>Mg(2+)</name>
        <dbReference type="ChEBI" id="CHEBI:18420"/>
        <label>1</label>
    </ligand>
</feature>
<feature type="binding site" evidence="1">
    <location>
        <position position="112"/>
    </location>
    <ligand>
        <name>Mg(2+)</name>
        <dbReference type="ChEBI" id="CHEBI:18420"/>
        <label>1</label>
    </ligand>
</feature>
<feature type="binding site" evidence="1">
    <location>
        <position position="112"/>
    </location>
    <ligand>
        <name>Mg(2+)</name>
        <dbReference type="ChEBI" id="CHEBI:18420"/>
        <label>2</label>
    </ligand>
</feature>
<feature type="binding site" evidence="1">
    <location>
        <position position="114"/>
    </location>
    <ligand>
        <name>Mg(2+)</name>
        <dbReference type="ChEBI" id="CHEBI:18420"/>
        <label>1</label>
    </ligand>
</feature>
<feature type="binding site" evidence="1">
    <location>
        <begin position="115"/>
        <end position="118"/>
    </location>
    <ligand>
        <name>substrate</name>
    </ligand>
</feature>
<feature type="binding site" evidence="1">
    <location>
        <position position="115"/>
    </location>
    <ligand>
        <name>Mg(2+)</name>
        <dbReference type="ChEBI" id="CHEBI:18420"/>
        <label>2</label>
    </ligand>
</feature>
<feature type="binding site" evidence="1">
    <location>
        <position position="211"/>
    </location>
    <ligand>
        <name>substrate</name>
    </ligand>
</feature>
<feature type="binding site" evidence="1">
    <location>
        <position position="277"/>
    </location>
    <ligand>
        <name>substrate</name>
    </ligand>
</feature>
<feature type="binding site" evidence="1">
    <location>
        <position position="283"/>
    </location>
    <ligand>
        <name>Mg(2+)</name>
        <dbReference type="ChEBI" id="CHEBI:18420"/>
        <label>2</label>
    </ligand>
</feature>
<accession>Q4KJP6</accession>
<reference key="1">
    <citation type="journal article" date="2005" name="Nat. Biotechnol.">
        <title>Complete genome sequence of the plant commensal Pseudomonas fluorescens Pf-5.</title>
        <authorList>
            <person name="Paulsen I.T."/>
            <person name="Press C.M."/>
            <person name="Ravel J."/>
            <person name="Kobayashi D.Y."/>
            <person name="Myers G.S.A."/>
            <person name="Mavrodi D.V."/>
            <person name="DeBoy R.T."/>
            <person name="Seshadri R."/>
            <person name="Ren Q."/>
            <person name="Madupu R."/>
            <person name="Dodson R.J."/>
            <person name="Durkin A.S."/>
            <person name="Brinkac L.M."/>
            <person name="Daugherty S.C."/>
            <person name="Sullivan S.A."/>
            <person name="Rosovitz M.J."/>
            <person name="Gwinn M.L."/>
            <person name="Zhou L."/>
            <person name="Schneider D.J."/>
            <person name="Cartinhour S.W."/>
            <person name="Nelson W.C."/>
            <person name="Weidman J."/>
            <person name="Watkins K."/>
            <person name="Tran K."/>
            <person name="Khouri H."/>
            <person name="Pierson E.A."/>
            <person name="Pierson L.S. III"/>
            <person name="Thomashow L.S."/>
            <person name="Loper J.E."/>
        </authorList>
    </citation>
    <scope>NUCLEOTIDE SEQUENCE [LARGE SCALE GENOMIC DNA]</scope>
    <source>
        <strain>ATCC BAA-477 / NRRL B-23932 / Pf-5</strain>
    </source>
</reference>
<keyword id="KW-0119">Carbohydrate metabolism</keyword>
<keyword id="KW-0963">Cytoplasm</keyword>
<keyword id="KW-0378">Hydrolase</keyword>
<keyword id="KW-0460">Magnesium</keyword>
<keyword id="KW-0479">Metal-binding</keyword>
<protein>
    <recommendedName>
        <fullName evidence="1">Fructose-1,6-bisphosphatase class 1</fullName>
        <shortName evidence="1">FBPase class 1</shortName>
        <ecNumber evidence="1">3.1.3.11</ecNumber>
    </recommendedName>
    <alternativeName>
        <fullName evidence="1">D-fructose-1,6-bisphosphate 1-phosphohydrolase class 1</fullName>
    </alternativeName>
</protein>